<organism>
    <name type="scientific">Escherichia coli (strain K12)</name>
    <dbReference type="NCBI Taxonomy" id="83333"/>
    <lineage>
        <taxon>Bacteria</taxon>
        <taxon>Pseudomonadati</taxon>
        <taxon>Pseudomonadota</taxon>
        <taxon>Gammaproteobacteria</taxon>
        <taxon>Enterobacterales</taxon>
        <taxon>Enterobacteriaceae</taxon>
        <taxon>Escherichia</taxon>
    </lineage>
</organism>
<name>WZC_ECOLI</name>
<proteinExistence type="evidence at protein level"/>
<keyword id="KW-0002">3D-structure</keyword>
<keyword id="KW-0067">ATP-binding</keyword>
<keyword id="KW-0997">Cell inner membrane</keyword>
<keyword id="KW-1003">Cell membrane</keyword>
<keyword id="KW-0270">Exopolysaccharide synthesis</keyword>
<keyword id="KW-0418">Kinase</keyword>
<keyword id="KW-0472">Membrane</keyword>
<keyword id="KW-0547">Nucleotide-binding</keyword>
<keyword id="KW-0597">Phosphoprotein</keyword>
<keyword id="KW-1185">Reference proteome</keyword>
<keyword id="KW-0808">Transferase</keyword>
<keyword id="KW-0812">Transmembrane</keyword>
<keyword id="KW-1133">Transmembrane helix</keyword>
<keyword id="KW-0829">Tyrosine-protein kinase</keyword>
<accession>P76387</accession>
<accession>O08003</accession>
<accession>O08004</accession>
<accession>P71236</accession>
<evidence type="ECO:0000255" key="1"/>
<evidence type="ECO:0000269" key="2">
    <source>
    </source>
</evidence>
<evidence type="ECO:0000269" key="3">
    <source>
    </source>
</evidence>
<evidence type="ECO:0000305" key="4"/>
<evidence type="ECO:0000305" key="5">
    <source>
    </source>
</evidence>
<evidence type="ECO:0007829" key="6">
    <source>
        <dbReference type="PDB" id="3LA6"/>
    </source>
</evidence>
<comment type="function">
    <text evidence="3">Required for the extracellular polysaccharide colanic acid synthesis. The autophosphorylated form is inactive. Probably involved in the export of colanic acid from the cell to medium. Phosphorylates udg.</text>
</comment>
<comment type="catalytic activity">
    <reaction>
        <text>L-tyrosyl-[protein] + ATP = O-phospho-L-tyrosyl-[protein] + ADP + H(+)</text>
        <dbReference type="Rhea" id="RHEA:10596"/>
        <dbReference type="Rhea" id="RHEA-COMP:10136"/>
        <dbReference type="Rhea" id="RHEA-COMP:20101"/>
        <dbReference type="ChEBI" id="CHEBI:15378"/>
        <dbReference type="ChEBI" id="CHEBI:30616"/>
        <dbReference type="ChEBI" id="CHEBI:46858"/>
        <dbReference type="ChEBI" id="CHEBI:61978"/>
        <dbReference type="ChEBI" id="CHEBI:456216"/>
    </reaction>
</comment>
<comment type="activity regulation">
    <text>Dephosphorylated and activated by wzb.</text>
</comment>
<comment type="pathway">
    <text>Glycan metabolism; exopolysaccharide biosynthesis.</text>
</comment>
<comment type="subcellular location">
    <subcellularLocation>
        <location>Cell inner membrane</location>
        <topology>Multi-pass membrane protein</topology>
    </subcellularLocation>
</comment>
<comment type="PTM">
    <text evidence="3">Autophosphorylated. Seems to be phosphorylated through a cooperative two-step mechanism. First, Tyr-569 is phosphorylated in an intramolecular reaction that generates a significant increase of protein kinase activity. Then Tyr-708, Tyr-710, Tyr-711, Tyr-713 and Tyr-715 are phosphorylated in an intermolecular Tyr-569-dependent reaction.</text>
</comment>
<comment type="miscellaneous">
    <text>Additional site-directed mutagenesis experiments indicated that the tyrosine residues at positions 708, 710, 711, 713 and 715 are phosphorylation sites, whereas tyrosine at position 705 is not.</text>
</comment>
<comment type="similarity">
    <text evidence="4">Belongs to the etk/wzc family.</text>
</comment>
<protein>
    <recommendedName>
        <fullName>Tyrosine-protein kinase wzc</fullName>
        <ecNumber>2.7.10.-</ecNumber>
    </recommendedName>
</protein>
<feature type="chain" id="PRO_0000212353" description="Tyrosine-protein kinase wzc">
    <location>
        <begin position="1"/>
        <end position="720"/>
    </location>
</feature>
<feature type="topological domain" description="Cytoplasmic" evidence="1">
    <location>
        <begin position="1"/>
        <end position="31"/>
    </location>
</feature>
<feature type="transmembrane region" description="Helical" evidence="1">
    <location>
        <begin position="32"/>
        <end position="52"/>
    </location>
</feature>
<feature type="topological domain" description="Periplasmic" evidence="1">
    <location>
        <begin position="53"/>
        <end position="424"/>
    </location>
</feature>
<feature type="transmembrane region" description="Helical" evidence="1">
    <location>
        <begin position="425"/>
        <end position="445"/>
    </location>
</feature>
<feature type="topological domain" description="Cytoplasmic" evidence="1">
    <location>
        <begin position="446"/>
        <end position="720"/>
    </location>
</feature>
<feature type="modified residue" description="Phosphotyrosine; by autocatalysis" evidence="5">
    <location>
        <position position="569"/>
    </location>
</feature>
<feature type="modified residue" description="Phosphotyrosine" evidence="5">
    <location>
        <position position="708"/>
    </location>
</feature>
<feature type="modified residue" description="Phosphotyrosine" evidence="5">
    <location>
        <position position="710"/>
    </location>
</feature>
<feature type="modified residue" description="Phosphotyrosine" evidence="5">
    <location>
        <position position="711"/>
    </location>
</feature>
<feature type="modified residue" description="Phosphotyrosine" evidence="5">
    <location>
        <position position="713"/>
    </location>
</feature>
<feature type="modified residue" description="Phosphotyrosine" evidence="5">
    <location>
        <position position="715"/>
    </location>
</feature>
<feature type="mutagenesis site" description="No loss of autophosphorylation." evidence="2">
    <original>Y</original>
    <variation>F</variation>
    <location>
        <position position="467"/>
    </location>
</feature>
<feature type="mutagenesis site" description="No loss of autophosphorylation." evidence="2">
    <original>Y</original>
    <variation>F</variation>
    <location>
        <position position="491"/>
    </location>
</feature>
<feature type="mutagenesis site" description="Loss of autophosphorylation." evidence="2">
    <original>K</original>
    <variation>M</variation>
    <location>
        <position position="540"/>
    </location>
</feature>
<feature type="mutagenesis site" description="Loss of autophosphorylation." evidence="2">
    <original>Y</original>
    <variation>F</variation>
    <location>
        <position position="569"/>
    </location>
</feature>
<feature type="mutagenesis site" description="No loss of autophosphorylation." evidence="2">
    <original>Y</original>
    <variation>F</variation>
    <location>
        <position position="636"/>
    </location>
</feature>
<feature type="mutagenesis site" description="No loss of autophosphorylation." evidence="2">
    <original>Y</original>
    <variation>F</variation>
    <location>
        <position position="668"/>
    </location>
</feature>
<feature type="helix" evidence="6">
    <location>
        <begin position="456"/>
        <end position="460"/>
    </location>
</feature>
<feature type="turn" evidence="6">
    <location>
        <begin position="461"/>
        <end position="463"/>
    </location>
</feature>
<feature type="strand" evidence="6">
    <location>
        <begin position="466"/>
        <end position="471"/>
    </location>
</feature>
<feature type="helix" evidence="6">
    <location>
        <begin position="474"/>
        <end position="478"/>
    </location>
</feature>
<feature type="helix" evidence="6">
    <location>
        <begin position="497"/>
        <end position="500"/>
    </location>
</feature>
<feature type="helix" evidence="6">
    <location>
        <begin position="505"/>
        <end position="520"/>
    </location>
</feature>
<feature type="turn" evidence="6">
    <location>
        <begin position="522"/>
        <end position="525"/>
    </location>
</feature>
<feature type="strand" evidence="6">
    <location>
        <begin position="528"/>
        <end position="539"/>
    </location>
</feature>
<feature type="helix" evidence="6">
    <location>
        <begin position="540"/>
        <end position="552"/>
    </location>
</feature>
<feature type="turn" evidence="6">
    <location>
        <begin position="553"/>
        <end position="555"/>
    </location>
</feature>
<feature type="strand" evidence="6">
    <location>
        <begin position="558"/>
        <end position="562"/>
    </location>
</feature>
<feature type="turn" evidence="6">
    <location>
        <begin position="565"/>
        <end position="567"/>
    </location>
</feature>
<feature type="helix" evidence="6">
    <location>
        <begin position="570"/>
        <end position="574"/>
    </location>
</feature>
<feature type="helix" evidence="6">
    <location>
        <begin position="582"/>
        <end position="587"/>
    </location>
</feature>
<feature type="turn" evidence="6">
    <location>
        <begin position="592"/>
        <end position="595"/>
    </location>
</feature>
<feature type="strand" evidence="6">
    <location>
        <begin position="604"/>
        <end position="607"/>
    </location>
</feature>
<feature type="helix" evidence="6">
    <location>
        <begin position="616"/>
        <end position="620"/>
    </location>
</feature>
<feature type="helix" evidence="6">
    <location>
        <begin position="623"/>
        <end position="635"/>
    </location>
</feature>
<feature type="strand" evidence="6">
    <location>
        <begin position="637"/>
        <end position="642"/>
    </location>
</feature>
<feature type="turn" evidence="6">
    <location>
        <begin position="646"/>
        <end position="648"/>
    </location>
</feature>
<feature type="helix" evidence="6">
    <location>
        <begin position="651"/>
        <end position="655"/>
    </location>
</feature>
<feature type="turn" evidence="6">
    <location>
        <begin position="656"/>
        <end position="658"/>
    </location>
</feature>
<feature type="strand" evidence="6">
    <location>
        <begin position="660"/>
        <end position="667"/>
    </location>
</feature>
<feature type="turn" evidence="6">
    <location>
        <begin position="668"/>
        <end position="670"/>
    </location>
</feature>
<feature type="helix" evidence="6">
    <location>
        <begin position="673"/>
        <end position="685"/>
    </location>
</feature>
<feature type="strand" evidence="6">
    <location>
        <begin position="692"/>
        <end position="698"/>
    </location>
</feature>
<sequence>MTEKVKQHAAPVTGSDEIDIGRLVGTVIEARWWVIGITTVFALCAVVYTFFATPIYSADALVQIEQNSGNSLVQDIGSALANKPPASDAEIQLIRSRLVLGKTVDDLDLDIAVSKNTFPIFGAGWDRLMGRQNETVKVTTFNRPKEMADQVFTLNVLDNKNYTLSSDGGFSARGQAGQMLKKEGVTLMVEAIHASPGSEFTVTKYSTLGMINQLQNSLTVTENGKDAGVLSLTYTGEDREQIRDILNSIARNYQEQNIERKSAEASKSLAFLAQQLPEVRSRLDVAENKLNAFRQDKDSVDLPLEAKAVLDSMVNIDAQLNELTFKEAEISKLYTKVHPAYRTLLEKRQALEDEKAKLNGRVTAMPKTQQEIVRLTRDVESGQQVYMQLLNKEQELKITEASTVGDVRIVDPAITQPGVLKPKKGLIILGAIILGLMLSIVGVLLRSLFNRGIESPQVLEEHGISVYASIPLSEWQKARDSVKTIKGIKRYKQSQLLAVGNPTDLAIEAIRSLRTSLHFAMMQAQNNVLMMTGVSPSIGKTFVCANLAAVISQTNKRVLLIDCDMRKGYTHELLGTNNVNGLSEILIGQGDITTAAKPTSIAKFDLIPRGQVPPNPSELLMSERFAELVNWASKNYDLVLIDTPPILAVTDAAIVGRHVGTTLMVARYAVNTLKEVETSLSRFEQNGIPVKGVILNSIFRRASAYQDYGYYEYEYKSDAK</sequence>
<reference key="1">
    <citation type="journal article" date="1996" name="J. Bacteriol.">
        <title>Organization of the Escherichia coli K-12 gene cluster responsible for production of the extracellular polysaccharide colanic acid.</title>
        <authorList>
            <person name="Stevenson G."/>
            <person name="Andrianopoulos K."/>
            <person name="Hobbs M."/>
            <person name="Reeves P.R."/>
        </authorList>
    </citation>
    <scope>NUCLEOTIDE SEQUENCE [GENOMIC DNA]</scope>
    <source>
        <strain>K12</strain>
    </source>
</reference>
<reference key="2">
    <citation type="journal article" date="1996" name="DNA Res.">
        <title>A 460-kb DNA sequence of the Escherichia coli K-12 genome corresponding to the 40.1-50.0 min region on the linkage map.</title>
        <authorList>
            <person name="Itoh T."/>
            <person name="Aiba H."/>
            <person name="Baba T."/>
            <person name="Fujita K."/>
            <person name="Hayashi K."/>
            <person name="Inada T."/>
            <person name="Isono K."/>
            <person name="Kasai H."/>
            <person name="Kimura S."/>
            <person name="Kitakawa M."/>
            <person name="Kitagawa M."/>
            <person name="Makino K."/>
            <person name="Miki T."/>
            <person name="Mizobuchi K."/>
            <person name="Mori H."/>
            <person name="Mori T."/>
            <person name="Motomura K."/>
            <person name="Nakade S."/>
            <person name="Nakamura Y."/>
            <person name="Nashimoto H."/>
            <person name="Nishio Y."/>
            <person name="Oshima T."/>
            <person name="Saito N."/>
            <person name="Sampei G."/>
            <person name="Seki Y."/>
            <person name="Sivasundaram S."/>
            <person name="Tagami H."/>
            <person name="Takeda J."/>
            <person name="Takemoto K."/>
            <person name="Wada C."/>
            <person name="Yamamoto Y."/>
            <person name="Horiuchi T."/>
        </authorList>
    </citation>
    <scope>NUCLEOTIDE SEQUENCE [LARGE SCALE GENOMIC DNA]</scope>
    <source>
        <strain>K12 / W3110 / ATCC 27325 / DSM 5911</strain>
    </source>
</reference>
<reference key="3">
    <citation type="journal article" date="1997" name="Science">
        <title>The complete genome sequence of Escherichia coli K-12.</title>
        <authorList>
            <person name="Blattner F.R."/>
            <person name="Plunkett G. III"/>
            <person name="Bloch C.A."/>
            <person name="Perna N.T."/>
            <person name="Burland V."/>
            <person name="Riley M."/>
            <person name="Collado-Vides J."/>
            <person name="Glasner J.D."/>
            <person name="Rode C.K."/>
            <person name="Mayhew G.F."/>
            <person name="Gregor J."/>
            <person name="Davis N.W."/>
            <person name="Kirkpatrick H.A."/>
            <person name="Goeden M.A."/>
            <person name="Rose D.J."/>
            <person name="Mau B."/>
            <person name="Shao Y."/>
        </authorList>
    </citation>
    <scope>NUCLEOTIDE SEQUENCE [LARGE SCALE GENOMIC DNA]</scope>
    <source>
        <strain>K12 / MG1655 / ATCC 47076</strain>
    </source>
</reference>
<reference key="4">
    <citation type="journal article" date="2006" name="Mol. Syst. Biol.">
        <title>Highly accurate genome sequences of Escherichia coli K-12 strains MG1655 and W3110.</title>
        <authorList>
            <person name="Hayashi K."/>
            <person name="Morooka N."/>
            <person name="Yamamoto Y."/>
            <person name="Fujita K."/>
            <person name="Isono K."/>
            <person name="Choi S."/>
            <person name="Ohtsubo E."/>
            <person name="Baba T."/>
            <person name="Wanner B.L."/>
            <person name="Mori H."/>
            <person name="Horiuchi T."/>
        </authorList>
    </citation>
    <scope>NUCLEOTIDE SEQUENCE [LARGE SCALE GENOMIC DNA]</scope>
    <source>
        <strain>K12 / W3110 / ATCC 27325 / DSM 5911</strain>
    </source>
</reference>
<reference key="5">
    <citation type="journal article" date="1999" name="J. Bacteriol.">
        <title>Cells of Escherichia coli contain a protein-tyrosine kinase, Wzc, and a phosphotyrosine-protein phosphatase, Wzb.</title>
        <authorList>
            <person name="Vincent C."/>
            <person name="Doublet P."/>
            <person name="Grangeasse C."/>
            <person name="Vaganay E."/>
            <person name="Cozzone A.J."/>
            <person name="Duclos B."/>
        </authorList>
    </citation>
    <scope>CHARACTERIZATION</scope>
    <source>
        <strain>K12 / JM109 / ATCC 53323</strain>
    </source>
</reference>
<reference key="6">
    <citation type="journal article" date="2000" name="J. Mol. Biol.">
        <title>Relationship between exopolysaccharide production and protein-tyrosine phosphorylation in Gram-negative bacteria.</title>
        <authorList>
            <person name="Vincent C."/>
            <person name="Duclos B."/>
            <person name="Grangeasse C."/>
            <person name="Vaganay E."/>
            <person name="Riberty M."/>
            <person name="Cozzone A.J."/>
            <person name="Doublet P."/>
        </authorList>
    </citation>
    <scope>CHARACTERIZATION</scope>
    <source>
        <strain>K12 / JM109 / ATCC 53323</strain>
    </source>
</reference>
<reference key="7">
    <citation type="journal article" date="2002" name="J. Biol. Chem.">
        <title>Tyrosine phosphorylation of protein kinase Wzc from Escherichia coli K12 occurs through a two-step process.</title>
        <authorList>
            <person name="Grangeasse C."/>
            <person name="Doublet P."/>
            <person name="Cozzone A.J."/>
        </authorList>
    </citation>
    <scope>CHARACTERIZATION</scope>
    <scope>MUTAGENESIS</scope>
    <source>
        <strain>K12 / JM109 / ATCC 53323</strain>
    </source>
</reference>
<reference key="8">
    <citation type="journal article" date="2003" name="J. Biol. Chem.">
        <title>Autophosphorylation of the Escherichia coli protein kinase Wzc regulates tyrosine phosphorylation of Ugd, a UDP-glucose dehydrogenase.</title>
        <authorList>
            <person name="Grangeasse C."/>
            <person name="Obadia B."/>
            <person name="Mijakovic I."/>
            <person name="Deutscher J."/>
            <person name="Cozzone A.J."/>
            <person name="Doublet P."/>
        </authorList>
    </citation>
    <scope>PHOSPHORYLATION AT TYR-569; TYR-708; TYR-710; TYR-711; TYR-713 AND TYR-715</scope>
    <scope>FUNCTION</scope>
</reference>
<reference key="9">
    <citation type="journal article" date="2005" name="Science">
        <title>Global topology analysis of the Escherichia coli inner membrane proteome.</title>
        <authorList>
            <person name="Daley D.O."/>
            <person name="Rapp M."/>
            <person name="Granseth E."/>
            <person name="Melen K."/>
            <person name="Drew D."/>
            <person name="von Heijne G."/>
        </authorList>
    </citation>
    <scope>TOPOLOGY [LARGE SCALE ANALYSIS]</scope>
    <source>
        <strain>K12 / MG1655 / ATCC 47076</strain>
    </source>
</reference>
<dbReference type="EC" id="2.7.10.-"/>
<dbReference type="EMBL" id="U38473">
    <property type="protein sequence ID" value="AAC77835.1"/>
    <property type="molecule type" value="Genomic_DNA"/>
</dbReference>
<dbReference type="EMBL" id="U00096">
    <property type="protein sequence ID" value="AAC75121.2"/>
    <property type="molecule type" value="Genomic_DNA"/>
</dbReference>
<dbReference type="EMBL" id="AP009048">
    <property type="protein sequence ID" value="BAA15913.1"/>
    <property type="molecule type" value="Genomic_DNA"/>
</dbReference>
<dbReference type="PIR" id="C64972">
    <property type="entry name" value="C64972"/>
</dbReference>
<dbReference type="RefSeq" id="NP_416564.4">
    <property type="nucleotide sequence ID" value="NC_000913.3"/>
</dbReference>
<dbReference type="RefSeq" id="WP_000137196.1">
    <property type="nucleotide sequence ID" value="NZ_LN832404.1"/>
</dbReference>
<dbReference type="PDB" id="3LA6">
    <property type="method" value="X-ray"/>
    <property type="resolution" value="3.20 A"/>
    <property type="chains" value="A/B/C/D/E/F/G/H/I/J/K/L/M/N/O/P=447-720"/>
</dbReference>
<dbReference type="PDBsum" id="3LA6"/>
<dbReference type="BMRB" id="P76387"/>
<dbReference type="SMR" id="P76387"/>
<dbReference type="BioGRID" id="4262960">
    <property type="interactions" value="337"/>
</dbReference>
<dbReference type="DIP" id="DIP-28075N"/>
<dbReference type="FunCoup" id="P76387">
    <property type="interactions" value="460"/>
</dbReference>
<dbReference type="IntAct" id="P76387">
    <property type="interactions" value="4"/>
</dbReference>
<dbReference type="MINT" id="P76387"/>
<dbReference type="STRING" id="511145.b2060"/>
<dbReference type="TCDB" id="8.A.3.3.2">
    <property type="family name" value="the cytoplasmic membrane-periplasmic auxiliary-1 (mpa1) protein with cytoplasmic (c) domain (mpa1-c or mpa1+c) family"/>
</dbReference>
<dbReference type="iPTMnet" id="P76387"/>
<dbReference type="PaxDb" id="511145-b2060"/>
<dbReference type="EnsemblBacteria" id="AAC75121">
    <property type="protein sequence ID" value="AAC75121"/>
    <property type="gene ID" value="b2060"/>
</dbReference>
<dbReference type="GeneID" id="946567"/>
<dbReference type="KEGG" id="ecj:JW2045"/>
<dbReference type="KEGG" id="eco:b2060"/>
<dbReference type="KEGG" id="ecoc:C3026_11590"/>
<dbReference type="PATRIC" id="fig|511145.12.peg.2137"/>
<dbReference type="EchoBASE" id="EB3338"/>
<dbReference type="eggNOG" id="COG0489">
    <property type="taxonomic scope" value="Bacteria"/>
</dbReference>
<dbReference type="eggNOG" id="COG3206">
    <property type="taxonomic scope" value="Bacteria"/>
</dbReference>
<dbReference type="HOGENOM" id="CLU_009912_0_0_6"/>
<dbReference type="InParanoid" id="P76387"/>
<dbReference type="OMA" id="TKDHPAY"/>
<dbReference type="OrthoDB" id="9775724at2"/>
<dbReference type="PhylomeDB" id="P76387"/>
<dbReference type="BioCyc" id="EcoCyc:G7105-MONOMER"/>
<dbReference type="BioCyc" id="MetaCyc:G7105-MONOMER"/>
<dbReference type="BRENDA" id="2.7.10.1">
    <property type="organism ID" value="2026"/>
</dbReference>
<dbReference type="UniPathway" id="UPA00631"/>
<dbReference type="EvolutionaryTrace" id="P76387"/>
<dbReference type="PRO" id="PR:P76387"/>
<dbReference type="Proteomes" id="UP000000625">
    <property type="component" value="Chromosome"/>
</dbReference>
<dbReference type="GO" id="GO:0005886">
    <property type="term" value="C:plasma membrane"/>
    <property type="evidence" value="ECO:0000314"/>
    <property type="project" value="EcoCyc"/>
</dbReference>
<dbReference type="GO" id="GO:0005524">
    <property type="term" value="F:ATP binding"/>
    <property type="evidence" value="ECO:0007669"/>
    <property type="project" value="UniProtKB-KW"/>
</dbReference>
<dbReference type="GO" id="GO:0016887">
    <property type="term" value="F:ATP hydrolysis activity"/>
    <property type="evidence" value="ECO:0000314"/>
    <property type="project" value="EcoCyc"/>
</dbReference>
<dbReference type="GO" id="GO:0042802">
    <property type="term" value="F:identical protein binding"/>
    <property type="evidence" value="ECO:0000314"/>
    <property type="project" value="EcoCyc"/>
</dbReference>
<dbReference type="GO" id="GO:0004713">
    <property type="term" value="F:protein tyrosine kinase activity"/>
    <property type="evidence" value="ECO:0000314"/>
    <property type="project" value="EcoCyc"/>
</dbReference>
<dbReference type="GO" id="GO:0009242">
    <property type="term" value="P:colanic acid biosynthetic process"/>
    <property type="evidence" value="ECO:0000315"/>
    <property type="project" value="EcoCyc"/>
</dbReference>
<dbReference type="GO" id="GO:0000271">
    <property type="term" value="P:polysaccharide biosynthetic process"/>
    <property type="evidence" value="ECO:0007669"/>
    <property type="project" value="UniProtKB-KW"/>
</dbReference>
<dbReference type="CDD" id="cd05387">
    <property type="entry name" value="BY-kinase"/>
    <property type="match status" value="1"/>
</dbReference>
<dbReference type="FunFam" id="3.40.50.300:FF:000527">
    <property type="entry name" value="Tyrosine-protein kinase etk"/>
    <property type="match status" value="1"/>
</dbReference>
<dbReference type="Gene3D" id="3.40.50.300">
    <property type="entry name" value="P-loop containing nucleotide triphosphate hydrolases"/>
    <property type="match status" value="1"/>
</dbReference>
<dbReference type="InterPro" id="IPR025669">
    <property type="entry name" value="AAA_dom"/>
</dbReference>
<dbReference type="InterPro" id="IPR050445">
    <property type="entry name" value="Bact_polysacc_biosynth/exp"/>
</dbReference>
<dbReference type="InterPro" id="IPR032807">
    <property type="entry name" value="GNVR"/>
</dbReference>
<dbReference type="InterPro" id="IPR003856">
    <property type="entry name" value="LPS_length_determ_N_term"/>
</dbReference>
<dbReference type="InterPro" id="IPR027417">
    <property type="entry name" value="P-loop_NTPase"/>
</dbReference>
<dbReference type="InterPro" id="IPR005702">
    <property type="entry name" value="Wzc-like_C"/>
</dbReference>
<dbReference type="NCBIfam" id="TIGR01007">
    <property type="entry name" value="eps_fam"/>
    <property type="match status" value="1"/>
</dbReference>
<dbReference type="NCBIfam" id="NF008568">
    <property type="entry name" value="PRK11519.1"/>
    <property type="match status" value="1"/>
</dbReference>
<dbReference type="PANTHER" id="PTHR32309">
    <property type="entry name" value="TYROSINE-PROTEIN KINASE"/>
    <property type="match status" value="1"/>
</dbReference>
<dbReference type="PANTHER" id="PTHR32309:SF32">
    <property type="entry name" value="TYROSINE-PROTEIN KINASE ETK-RELATED"/>
    <property type="match status" value="1"/>
</dbReference>
<dbReference type="Pfam" id="PF13614">
    <property type="entry name" value="AAA_31"/>
    <property type="match status" value="1"/>
</dbReference>
<dbReference type="Pfam" id="PF13807">
    <property type="entry name" value="GNVR"/>
    <property type="match status" value="1"/>
</dbReference>
<dbReference type="Pfam" id="PF23607">
    <property type="entry name" value="WZC_N"/>
    <property type="match status" value="1"/>
</dbReference>
<dbReference type="Pfam" id="PF02706">
    <property type="entry name" value="Wzz"/>
    <property type="match status" value="1"/>
</dbReference>
<dbReference type="SUPFAM" id="SSF52540">
    <property type="entry name" value="P-loop containing nucleoside triphosphate hydrolases"/>
    <property type="match status" value="1"/>
</dbReference>
<gene>
    <name type="primary">wzc</name>
    <name type="ordered locus">b2060</name>
    <name type="ordered locus">JW2045</name>
</gene>